<comment type="function">
    <text evidence="1">Probably part of an ABC transporter complex. Responsible for energy coupling to the transport system (By similarity).</text>
</comment>
<comment type="subcellular location">
    <subcellularLocation>
        <location evidence="1">Cell membrane</location>
        <topology evidence="1">Peripheral membrane protein</topology>
    </subcellularLocation>
</comment>
<comment type="similarity">
    <text evidence="3">Belongs to the ABC transporter superfamily.</text>
</comment>
<protein>
    <recommendedName>
        <fullName>Putative ABC transporter ATP-binding protein MM_2387</fullName>
        <ecNumber>7.-.-.-</ecNumber>
    </recommendedName>
</protein>
<feature type="chain" id="PRO_0000092149" description="Putative ABC transporter ATP-binding protein MM_2387">
    <location>
        <begin position="1"/>
        <end position="498"/>
    </location>
</feature>
<feature type="domain" description="ABC transporter 1" evidence="2">
    <location>
        <begin position="2"/>
        <end position="242"/>
    </location>
</feature>
<feature type="domain" description="ABC transporter 2" evidence="2">
    <location>
        <begin position="258"/>
        <end position="490"/>
    </location>
</feature>
<feature type="binding site" evidence="2">
    <location>
        <begin position="36"/>
        <end position="43"/>
    </location>
    <ligand>
        <name>ATP</name>
        <dbReference type="ChEBI" id="CHEBI:30616"/>
        <label>1</label>
    </ligand>
</feature>
<feature type="binding site" evidence="2">
    <location>
        <begin position="290"/>
        <end position="297"/>
    </location>
    <ligand>
        <name>ATP</name>
        <dbReference type="ChEBI" id="CHEBI:30616"/>
        <label>2</label>
    </ligand>
</feature>
<accession>Q8PUE7</accession>
<reference key="1">
    <citation type="journal article" date="2002" name="J. Mol. Microbiol. Biotechnol.">
        <title>The genome of Methanosarcina mazei: evidence for lateral gene transfer between Bacteria and Archaea.</title>
        <authorList>
            <person name="Deppenmeier U."/>
            <person name="Johann A."/>
            <person name="Hartsch T."/>
            <person name="Merkl R."/>
            <person name="Schmitz R.A."/>
            <person name="Martinez-Arias R."/>
            <person name="Henne A."/>
            <person name="Wiezer A."/>
            <person name="Baeumer S."/>
            <person name="Jacobi C."/>
            <person name="Brueggemann H."/>
            <person name="Lienard T."/>
            <person name="Christmann A."/>
            <person name="Boemecke M."/>
            <person name="Steckel S."/>
            <person name="Bhattacharyya A."/>
            <person name="Lykidis A."/>
            <person name="Overbeek R."/>
            <person name="Klenk H.-P."/>
            <person name="Gunsalus R.P."/>
            <person name="Fritz H.-J."/>
            <person name="Gottschalk G."/>
        </authorList>
    </citation>
    <scope>NUCLEOTIDE SEQUENCE [LARGE SCALE GENOMIC DNA]</scope>
    <source>
        <strain>ATCC BAA-159 / DSM 3647 / Goe1 / Go1 / JCM 11833 / OCM 88</strain>
    </source>
</reference>
<dbReference type="EC" id="7.-.-.-"/>
<dbReference type="EMBL" id="AE008384">
    <property type="protein sequence ID" value="AAM32083.1"/>
    <property type="molecule type" value="Genomic_DNA"/>
</dbReference>
<dbReference type="RefSeq" id="WP_011034311.1">
    <property type="nucleotide sequence ID" value="NC_003901.1"/>
</dbReference>
<dbReference type="SMR" id="Q8PUE7"/>
<dbReference type="KEGG" id="mma:MM_2387"/>
<dbReference type="PATRIC" id="fig|192952.21.peg.2734"/>
<dbReference type="eggNOG" id="arCOG00188">
    <property type="taxonomic scope" value="Archaea"/>
</dbReference>
<dbReference type="HOGENOM" id="CLU_000604_86_7_2"/>
<dbReference type="Proteomes" id="UP000000595">
    <property type="component" value="Chromosome"/>
</dbReference>
<dbReference type="GO" id="GO:0043190">
    <property type="term" value="C:ATP-binding cassette (ABC) transporter complex"/>
    <property type="evidence" value="ECO:0007669"/>
    <property type="project" value="TreeGrafter"/>
</dbReference>
<dbReference type="GO" id="GO:0005524">
    <property type="term" value="F:ATP binding"/>
    <property type="evidence" value="ECO:0007669"/>
    <property type="project" value="UniProtKB-KW"/>
</dbReference>
<dbReference type="GO" id="GO:0016887">
    <property type="term" value="F:ATP hydrolysis activity"/>
    <property type="evidence" value="ECO:0007669"/>
    <property type="project" value="InterPro"/>
</dbReference>
<dbReference type="GO" id="GO:0042626">
    <property type="term" value="F:ATPase-coupled transmembrane transporter activity"/>
    <property type="evidence" value="ECO:0007669"/>
    <property type="project" value="TreeGrafter"/>
</dbReference>
<dbReference type="CDD" id="cd03225">
    <property type="entry name" value="ABC_cobalt_CbiO_domain1"/>
    <property type="match status" value="2"/>
</dbReference>
<dbReference type="FunFam" id="3.40.50.300:FF:000224">
    <property type="entry name" value="Energy-coupling factor transporter ATP-binding protein EcfA"/>
    <property type="match status" value="2"/>
</dbReference>
<dbReference type="Gene3D" id="3.40.50.300">
    <property type="entry name" value="P-loop containing nucleotide triphosphate hydrolases"/>
    <property type="match status" value="2"/>
</dbReference>
<dbReference type="InterPro" id="IPR003593">
    <property type="entry name" value="AAA+_ATPase"/>
</dbReference>
<dbReference type="InterPro" id="IPR003439">
    <property type="entry name" value="ABC_transporter-like_ATP-bd"/>
</dbReference>
<dbReference type="InterPro" id="IPR017871">
    <property type="entry name" value="ABC_transporter-like_CS"/>
</dbReference>
<dbReference type="InterPro" id="IPR015856">
    <property type="entry name" value="ABC_transpr_CbiO/EcfA_su"/>
</dbReference>
<dbReference type="InterPro" id="IPR050095">
    <property type="entry name" value="ECF_ABC_transporter_ATP-bd"/>
</dbReference>
<dbReference type="InterPro" id="IPR027417">
    <property type="entry name" value="P-loop_NTPase"/>
</dbReference>
<dbReference type="NCBIfam" id="NF010167">
    <property type="entry name" value="PRK13648.1"/>
    <property type="match status" value="2"/>
</dbReference>
<dbReference type="PANTHER" id="PTHR43553:SF21">
    <property type="entry name" value="ABC TRANSPORTER ATP-BINDING PROTEIN MA_1418-RELATED"/>
    <property type="match status" value="1"/>
</dbReference>
<dbReference type="PANTHER" id="PTHR43553">
    <property type="entry name" value="HEAVY METAL TRANSPORTER"/>
    <property type="match status" value="1"/>
</dbReference>
<dbReference type="Pfam" id="PF00005">
    <property type="entry name" value="ABC_tran"/>
    <property type="match status" value="2"/>
</dbReference>
<dbReference type="SMART" id="SM00382">
    <property type="entry name" value="AAA"/>
    <property type="match status" value="2"/>
</dbReference>
<dbReference type="SUPFAM" id="SSF52540">
    <property type="entry name" value="P-loop containing nucleoside triphosphate hydrolases"/>
    <property type="match status" value="2"/>
</dbReference>
<dbReference type="PROSITE" id="PS00211">
    <property type="entry name" value="ABC_TRANSPORTER_1"/>
    <property type="match status" value="1"/>
</dbReference>
<dbReference type="PROSITE" id="PS50893">
    <property type="entry name" value="ABC_TRANSPORTER_2"/>
    <property type="match status" value="2"/>
</dbReference>
<name>Y2387_METMA</name>
<sequence length="498" mass="54819">MIELRNLSYTYGTAEEPSLKNINLKVKKGELLLVTGHSAAGKTTLALAMAGILHHEIGGKIEGNLSFKNRDIKEFDGIKELSRHTGMVFDDAESQLIFTTVEEEILSGLENRGYSGKEIQRRLNEVMELCEIGHLKERAPHTLSGGQKQKVALAATLALDTEVLILDEATAELDTEAVRKVFSVLKRLKEAEKTIIIVDHNIEDFLEIGDRVVLLEKGEIKAIKSPADFAAVSEDTDLTSKSSKKEYSCSQKERQPVISIKNLTQRYGEFNALDNLDLEIRSGELVAILGENGSGKTTLVKHLNGLLRPYSGNVSVKGLNTSLTPVNELVKHTGLVFQNPDNMLFEDTVEAEVAFGLNNIGITGSEAGDAIARSLELVNLKGKEKVFPRHLSRGERQRLAVACVIAMRPELIILDEPTTGLDAEESDRMMQLMKRLQLEGHTILMVTHNMQIVKDHAERVIRMASGKIVEDSANGACNSFKRNIKCVEEKCAEGGAIV</sequence>
<evidence type="ECO:0000250" key="1"/>
<evidence type="ECO:0000255" key="2">
    <source>
        <dbReference type="PROSITE-ProRule" id="PRU00434"/>
    </source>
</evidence>
<evidence type="ECO:0000305" key="3"/>
<organism>
    <name type="scientific">Methanosarcina mazei (strain ATCC BAA-159 / DSM 3647 / Goe1 / Go1 / JCM 11833 / OCM 88)</name>
    <name type="common">Methanosarcina frisia</name>
    <dbReference type="NCBI Taxonomy" id="192952"/>
    <lineage>
        <taxon>Archaea</taxon>
        <taxon>Methanobacteriati</taxon>
        <taxon>Methanobacteriota</taxon>
        <taxon>Stenosarchaea group</taxon>
        <taxon>Methanomicrobia</taxon>
        <taxon>Methanosarcinales</taxon>
        <taxon>Methanosarcinaceae</taxon>
        <taxon>Methanosarcina</taxon>
    </lineage>
</organism>
<proteinExistence type="inferred from homology"/>
<keyword id="KW-0067">ATP-binding</keyword>
<keyword id="KW-1003">Cell membrane</keyword>
<keyword id="KW-0472">Membrane</keyword>
<keyword id="KW-0547">Nucleotide-binding</keyword>
<keyword id="KW-0677">Repeat</keyword>
<keyword id="KW-1278">Translocase</keyword>
<keyword id="KW-0813">Transport</keyword>
<gene>
    <name type="ordered locus">MM_2387</name>
</gene>